<gene>
    <name type="primary">HEXBP</name>
</gene>
<sequence>MSETEDVKRPRTESSTSCRNCGKEGHYARECPEADSKGDERSTTCFRCGEEGHMSRECPNEARSGAAGAMTCFRCGEAGHMSRDCPNSAKPGAAKGFECYKCGQEGHLSRDCPSSQGGSRGGYGQKRGRSGAQGGYSGDRTCYKCGDAGHISRDCPNGQGGYSGAGDRTCYKCGDAGHISRDCPNGQGGYSGAGDRKCYKCGESGHMSRECPSAGSTGSGDRACYKCGKPGHISRECPEAGGSYGGSRGGGDRTCYKCGEAGHISRDCPSS</sequence>
<organism>
    <name type="scientific">Leishmania major</name>
    <dbReference type="NCBI Taxonomy" id="5664"/>
    <lineage>
        <taxon>Eukaryota</taxon>
        <taxon>Discoba</taxon>
        <taxon>Euglenozoa</taxon>
        <taxon>Kinetoplastea</taxon>
        <taxon>Metakinetoplastina</taxon>
        <taxon>Trypanosomatida</taxon>
        <taxon>Trypanosomatidae</taxon>
        <taxon>Leishmaniinae</taxon>
        <taxon>Leishmania</taxon>
    </lineage>
</organism>
<proteinExistence type="predicted"/>
<name>HEXP_LEIMA</name>
<comment type="function">
    <text>Binds to single-stranded DNA located in the 5' hexanucleotide repeat region of the L.major leishmanolysin (GP63) gene.</text>
</comment>
<comment type="subcellular location">
    <subcellularLocation>
        <location>Nucleus</location>
    </subcellularLocation>
</comment>
<reference key="1">
    <citation type="journal article" date="1993" name="J. Biol. Chem.">
        <title>Molecular cloning and expression of a Leishmania major gene encoding a single-stranded DNA-binding protein containing nine 'CCHC' zinc finger motifs.</title>
        <authorList>
            <person name="Webb J.R."/>
            <person name="McMaster W.R."/>
        </authorList>
    </citation>
    <scope>NUCLEOTIDE SEQUENCE [GENOMIC DNA]</scope>
    <source>
        <strain>NIH S</strain>
    </source>
</reference>
<protein>
    <recommendedName>
        <fullName>DNA-binding protein HEXBP</fullName>
    </recommendedName>
    <alternativeName>
        <fullName>Hexamer-binding protein</fullName>
    </alternativeName>
</protein>
<accession>Q04832</accession>
<keyword id="KW-0238">DNA-binding</keyword>
<keyword id="KW-0479">Metal-binding</keyword>
<keyword id="KW-0539">Nucleus</keyword>
<keyword id="KW-0677">Repeat</keyword>
<keyword id="KW-0862">Zinc</keyword>
<keyword id="KW-0863">Zinc-finger</keyword>
<evidence type="ECO:0000255" key="1">
    <source>
        <dbReference type="PROSITE-ProRule" id="PRU00047"/>
    </source>
</evidence>
<evidence type="ECO:0000256" key="2">
    <source>
        <dbReference type="SAM" id="MobiDB-lite"/>
    </source>
</evidence>
<dbReference type="EMBL" id="M94390">
    <property type="protein sequence ID" value="AAA29245.1"/>
    <property type="molecule type" value="Genomic_DNA"/>
</dbReference>
<dbReference type="PIR" id="A47156">
    <property type="entry name" value="A47156"/>
</dbReference>
<dbReference type="SMR" id="Q04832"/>
<dbReference type="VEuPathDB" id="TriTrypDB:LmjF.36.1640"/>
<dbReference type="VEuPathDB" id="TriTrypDB:LMJFC_360025100"/>
<dbReference type="VEuPathDB" id="TriTrypDB:LMJLV39_360022900"/>
<dbReference type="VEuPathDB" id="TriTrypDB:LMJSD75_360022700"/>
<dbReference type="eggNOG" id="KOG3070">
    <property type="taxonomic scope" value="Eukaryota"/>
</dbReference>
<dbReference type="GO" id="GO:0005634">
    <property type="term" value="C:nucleus"/>
    <property type="evidence" value="ECO:0007669"/>
    <property type="project" value="UniProtKB-SubCell"/>
</dbReference>
<dbReference type="GO" id="GO:0003677">
    <property type="term" value="F:DNA binding"/>
    <property type="evidence" value="ECO:0007669"/>
    <property type="project" value="UniProtKB-KW"/>
</dbReference>
<dbReference type="GO" id="GO:0008270">
    <property type="term" value="F:zinc ion binding"/>
    <property type="evidence" value="ECO:0007669"/>
    <property type="project" value="UniProtKB-KW"/>
</dbReference>
<dbReference type="FunFam" id="4.10.60.10:FF:000044">
    <property type="entry name" value="Putative universal minicircle sequence binding protein"/>
    <property type="match status" value="1"/>
</dbReference>
<dbReference type="FunFam" id="4.10.60.10:FF:000052">
    <property type="entry name" value="Putative universal minicircle sequence binding protein"/>
    <property type="match status" value="2"/>
</dbReference>
<dbReference type="FunFam" id="4.10.60.10:FF:000053">
    <property type="entry name" value="RNA recognition motif domain containing protein"/>
    <property type="match status" value="2"/>
</dbReference>
<dbReference type="FunFam" id="4.10.60.10:FF:000039">
    <property type="entry name" value="Universal minicircle sequence binding protein, putative"/>
    <property type="match status" value="2"/>
</dbReference>
<dbReference type="Gene3D" id="4.10.60.10">
    <property type="entry name" value="Zinc finger, CCHC-type"/>
    <property type="match status" value="9"/>
</dbReference>
<dbReference type="InterPro" id="IPR051714">
    <property type="entry name" value="CCHC-ZF_NABP"/>
</dbReference>
<dbReference type="InterPro" id="IPR001878">
    <property type="entry name" value="Znf_CCHC"/>
</dbReference>
<dbReference type="InterPro" id="IPR036875">
    <property type="entry name" value="Znf_CCHC_sf"/>
</dbReference>
<dbReference type="PANTHER" id="PTHR23002">
    <property type="entry name" value="ZINC FINGER CCHC DOMAIN CONTAINING PROTEIN"/>
    <property type="match status" value="1"/>
</dbReference>
<dbReference type="Pfam" id="PF00098">
    <property type="entry name" value="zf-CCHC"/>
    <property type="match status" value="9"/>
</dbReference>
<dbReference type="SMART" id="SM00343">
    <property type="entry name" value="ZnF_C2HC"/>
    <property type="match status" value="9"/>
</dbReference>
<dbReference type="SUPFAM" id="SSF57756">
    <property type="entry name" value="Retrovirus zinc finger-like domains"/>
    <property type="match status" value="5"/>
</dbReference>
<dbReference type="PROSITE" id="PS50158">
    <property type="entry name" value="ZF_CCHC"/>
    <property type="match status" value="9"/>
</dbReference>
<feature type="chain" id="PRO_0000083955" description="DNA-binding protein HEXBP">
    <location>
        <begin position="1"/>
        <end position="271"/>
    </location>
</feature>
<feature type="zinc finger region" description="CCHC-type 1" evidence="1">
    <location>
        <begin position="16"/>
        <end position="33"/>
    </location>
</feature>
<feature type="zinc finger region" description="CCHC-type 2" evidence="1">
    <location>
        <begin position="43"/>
        <end position="60"/>
    </location>
</feature>
<feature type="zinc finger region" description="CCHC-type 3" evidence="1">
    <location>
        <begin position="70"/>
        <end position="87"/>
    </location>
</feature>
<feature type="zinc finger region" description="CCHC-type 4" evidence="1">
    <location>
        <begin position="97"/>
        <end position="114"/>
    </location>
</feature>
<feature type="zinc finger region" description="CCHC-type 5" evidence="1">
    <location>
        <begin position="140"/>
        <end position="157"/>
    </location>
</feature>
<feature type="zinc finger region" description="CCHC-type 6" evidence="1">
    <location>
        <begin position="168"/>
        <end position="185"/>
    </location>
</feature>
<feature type="zinc finger region" description="CCHC-type 7" evidence="1">
    <location>
        <begin position="196"/>
        <end position="213"/>
    </location>
</feature>
<feature type="zinc finger region" description="CCHC-type 8" evidence="1">
    <location>
        <begin position="222"/>
        <end position="239"/>
    </location>
</feature>
<feature type="zinc finger region" description="CCHC-type 9" evidence="1">
    <location>
        <begin position="253"/>
        <end position="270"/>
    </location>
</feature>
<feature type="region of interest" description="Disordered" evidence="2">
    <location>
        <begin position="1"/>
        <end position="42"/>
    </location>
</feature>
<feature type="region of interest" description="Disordered" evidence="2">
    <location>
        <begin position="107"/>
        <end position="136"/>
    </location>
</feature>
<feature type="compositionally biased region" description="Basic and acidic residues" evidence="2">
    <location>
        <begin position="1"/>
        <end position="12"/>
    </location>
</feature>
<feature type="compositionally biased region" description="Basic and acidic residues" evidence="2">
    <location>
        <begin position="21"/>
        <end position="42"/>
    </location>
</feature>
<feature type="compositionally biased region" description="Gly residues" evidence="2">
    <location>
        <begin position="118"/>
        <end position="136"/>
    </location>
</feature>